<organism>
    <name type="scientific">Phocaeicola vulgatus (strain ATCC 8482 / DSM 1447 / JCM 5826 / CCUG 4940 / NBRC 14291 / NCTC 11154)</name>
    <name type="common">Bacteroides vulgatus</name>
    <dbReference type="NCBI Taxonomy" id="435590"/>
    <lineage>
        <taxon>Bacteria</taxon>
        <taxon>Pseudomonadati</taxon>
        <taxon>Bacteroidota</taxon>
        <taxon>Bacteroidia</taxon>
        <taxon>Bacteroidales</taxon>
        <taxon>Bacteroidaceae</taxon>
        <taxon>Phocaeicola</taxon>
    </lineage>
</organism>
<proteinExistence type="inferred from homology"/>
<evidence type="ECO:0000255" key="1">
    <source>
        <dbReference type="HAMAP-Rule" id="MF_00382"/>
    </source>
</evidence>
<evidence type="ECO:0000305" key="2"/>
<reference key="1">
    <citation type="journal article" date="2007" name="PLoS Biol.">
        <title>Evolution of symbiotic bacteria in the distal human intestine.</title>
        <authorList>
            <person name="Xu J."/>
            <person name="Mahowald M.A."/>
            <person name="Ley R.E."/>
            <person name="Lozupone C.A."/>
            <person name="Hamady M."/>
            <person name="Martens E.C."/>
            <person name="Henrissat B."/>
            <person name="Coutinho P.M."/>
            <person name="Minx P."/>
            <person name="Latreille P."/>
            <person name="Cordum H."/>
            <person name="Van Brunt A."/>
            <person name="Kim K."/>
            <person name="Fulton R.S."/>
            <person name="Fulton L.A."/>
            <person name="Clifton S.W."/>
            <person name="Wilson R.K."/>
            <person name="Knight R.D."/>
            <person name="Gordon J.I."/>
        </authorList>
    </citation>
    <scope>NUCLEOTIDE SEQUENCE [LARGE SCALE GENOMIC DNA]</scope>
    <source>
        <strain>ATCC 8482 / DSM 1447 / JCM 5826 / CCUG 4940 / NBRC 14291 / NCTC 11154</strain>
    </source>
</reference>
<feature type="chain" id="PRO_1000048928" description="Large ribosomal subunit protein bL20">
    <location>
        <begin position="1"/>
        <end position="116"/>
    </location>
</feature>
<name>RL20_PHOV8</name>
<protein>
    <recommendedName>
        <fullName evidence="1">Large ribosomal subunit protein bL20</fullName>
    </recommendedName>
    <alternativeName>
        <fullName evidence="2">50S ribosomal protein L20</fullName>
    </alternativeName>
</protein>
<keyword id="KW-0687">Ribonucleoprotein</keyword>
<keyword id="KW-0689">Ribosomal protein</keyword>
<keyword id="KW-0694">RNA-binding</keyword>
<keyword id="KW-0699">rRNA-binding</keyword>
<dbReference type="EMBL" id="CP000139">
    <property type="protein sequence ID" value="ABR41659.1"/>
    <property type="molecule type" value="Genomic_DNA"/>
</dbReference>
<dbReference type="RefSeq" id="WP_005847114.1">
    <property type="nucleotide sequence ID" value="NZ_JANSWM010000087.1"/>
</dbReference>
<dbReference type="SMR" id="A6L7J5"/>
<dbReference type="STRING" id="435590.BVU_4057"/>
<dbReference type="PaxDb" id="435590-BVU_4057"/>
<dbReference type="DNASU" id="5305016"/>
<dbReference type="GeneID" id="5305016"/>
<dbReference type="KEGG" id="bvu:BVU_4057"/>
<dbReference type="eggNOG" id="COG0292">
    <property type="taxonomic scope" value="Bacteria"/>
</dbReference>
<dbReference type="HOGENOM" id="CLU_123265_0_1_10"/>
<dbReference type="BioCyc" id="BVUL435590:G1G59-4195-MONOMER"/>
<dbReference type="Proteomes" id="UP000002861">
    <property type="component" value="Chromosome"/>
</dbReference>
<dbReference type="GO" id="GO:1990904">
    <property type="term" value="C:ribonucleoprotein complex"/>
    <property type="evidence" value="ECO:0007669"/>
    <property type="project" value="UniProtKB-KW"/>
</dbReference>
<dbReference type="GO" id="GO:0005840">
    <property type="term" value="C:ribosome"/>
    <property type="evidence" value="ECO:0007669"/>
    <property type="project" value="UniProtKB-KW"/>
</dbReference>
<dbReference type="GO" id="GO:0019843">
    <property type="term" value="F:rRNA binding"/>
    <property type="evidence" value="ECO:0007669"/>
    <property type="project" value="UniProtKB-UniRule"/>
</dbReference>
<dbReference type="GO" id="GO:0003735">
    <property type="term" value="F:structural constituent of ribosome"/>
    <property type="evidence" value="ECO:0007669"/>
    <property type="project" value="InterPro"/>
</dbReference>
<dbReference type="GO" id="GO:0000027">
    <property type="term" value="P:ribosomal large subunit assembly"/>
    <property type="evidence" value="ECO:0007669"/>
    <property type="project" value="UniProtKB-UniRule"/>
</dbReference>
<dbReference type="GO" id="GO:0006412">
    <property type="term" value="P:translation"/>
    <property type="evidence" value="ECO:0007669"/>
    <property type="project" value="InterPro"/>
</dbReference>
<dbReference type="CDD" id="cd07026">
    <property type="entry name" value="Ribosomal_L20"/>
    <property type="match status" value="1"/>
</dbReference>
<dbReference type="FunFam" id="1.10.1900.20:FF:000001">
    <property type="entry name" value="50S ribosomal protein L20"/>
    <property type="match status" value="1"/>
</dbReference>
<dbReference type="Gene3D" id="6.10.160.10">
    <property type="match status" value="1"/>
</dbReference>
<dbReference type="Gene3D" id="1.10.1900.20">
    <property type="entry name" value="Ribosomal protein L20"/>
    <property type="match status" value="1"/>
</dbReference>
<dbReference type="HAMAP" id="MF_00382">
    <property type="entry name" value="Ribosomal_bL20"/>
    <property type="match status" value="1"/>
</dbReference>
<dbReference type="InterPro" id="IPR005813">
    <property type="entry name" value="Ribosomal_bL20"/>
</dbReference>
<dbReference type="InterPro" id="IPR049946">
    <property type="entry name" value="RIBOSOMAL_L20_CS"/>
</dbReference>
<dbReference type="InterPro" id="IPR035566">
    <property type="entry name" value="Ribosomal_protein_bL20_C"/>
</dbReference>
<dbReference type="NCBIfam" id="TIGR01032">
    <property type="entry name" value="rplT_bact"/>
    <property type="match status" value="1"/>
</dbReference>
<dbReference type="PANTHER" id="PTHR10986">
    <property type="entry name" value="39S RIBOSOMAL PROTEIN L20"/>
    <property type="match status" value="1"/>
</dbReference>
<dbReference type="Pfam" id="PF00453">
    <property type="entry name" value="Ribosomal_L20"/>
    <property type="match status" value="1"/>
</dbReference>
<dbReference type="PRINTS" id="PR00062">
    <property type="entry name" value="RIBOSOMALL20"/>
</dbReference>
<dbReference type="SUPFAM" id="SSF74731">
    <property type="entry name" value="Ribosomal protein L20"/>
    <property type="match status" value="1"/>
</dbReference>
<dbReference type="PROSITE" id="PS00937">
    <property type="entry name" value="RIBOSOMAL_L20"/>
    <property type="match status" value="1"/>
</dbReference>
<comment type="function">
    <text evidence="1">Binds directly to 23S ribosomal RNA and is necessary for the in vitro assembly process of the 50S ribosomal subunit. It is not involved in the protein synthesizing functions of that subunit.</text>
</comment>
<comment type="similarity">
    <text evidence="1">Belongs to the bacterial ribosomal protein bL20 family.</text>
</comment>
<sequence>MPRSVNHVASRARRKKILGLTKGYFGARKNVWTVAKNTWEKGLTYAYRDRKNKKRNFRALWIQRINAAARLEGMSYSKLMGALHKAGIEINRKVLADLAMNHPEAFKAIVAKAKAA</sequence>
<gene>
    <name evidence="1" type="primary">rplT</name>
    <name type="ordered locus">BVU_4057</name>
</gene>
<accession>A6L7J5</accession>